<gene>
    <name type="primary">mchE</name>
</gene>
<evidence type="ECO:0000250" key="1"/>
<evidence type="ECO:0000255" key="2"/>
<evidence type="ECO:0000305" key="3"/>
<dbReference type="EMBL" id="AJ009631">
    <property type="protein sequence ID" value="CAJ44958.1"/>
    <property type="molecule type" value="Genomic_DNA"/>
</dbReference>
<dbReference type="SMR" id="Q9EXN6"/>
<dbReference type="GO" id="GO:0005886">
    <property type="term" value="C:plasma membrane"/>
    <property type="evidence" value="ECO:0007669"/>
    <property type="project" value="UniProtKB-SubCell"/>
</dbReference>
<dbReference type="GO" id="GO:0043213">
    <property type="term" value="P:bacteriocin transport"/>
    <property type="evidence" value="ECO:0007669"/>
    <property type="project" value="UniProtKB-KW"/>
</dbReference>
<dbReference type="GO" id="GO:0009306">
    <property type="term" value="P:protein secretion"/>
    <property type="evidence" value="ECO:0007669"/>
    <property type="project" value="InterPro"/>
</dbReference>
<dbReference type="GO" id="GO:0055085">
    <property type="term" value="P:transmembrane transport"/>
    <property type="evidence" value="ECO:0007669"/>
    <property type="project" value="InterPro"/>
</dbReference>
<dbReference type="Gene3D" id="2.40.50.100">
    <property type="match status" value="1"/>
</dbReference>
<dbReference type="InterPro" id="IPR043602">
    <property type="entry name" value="CusB-like_dom_1"/>
</dbReference>
<dbReference type="InterPro" id="IPR050739">
    <property type="entry name" value="MFP"/>
</dbReference>
<dbReference type="InterPro" id="IPR006144">
    <property type="entry name" value="Secretion_HlyD_CS"/>
</dbReference>
<dbReference type="PANTHER" id="PTHR30386:SF28">
    <property type="entry name" value="EXPORTED PROTEIN"/>
    <property type="match status" value="1"/>
</dbReference>
<dbReference type="PANTHER" id="PTHR30386">
    <property type="entry name" value="MEMBRANE FUSION SUBUNIT OF EMRAB-TOLC MULTIDRUG EFFLUX PUMP"/>
    <property type="match status" value="1"/>
</dbReference>
<dbReference type="Pfam" id="PF00529">
    <property type="entry name" value="CusB_dom_1"/>
    <property type="match status" value="1"/>
</dbReference>
<dbReference type="Pfam" id="PF13437">
    <property type="entry name" value="HlyD_3"/>
    <property type="match status" value="1"/>
</dbReference>
<dbReference type="PRINTS" id="PR01490">
    <property type="entry name" value="RTXTOXIND"/>
</dbReference>
<dbReference type="PROSITE" id="PS00543">
    <property type="entry name" value="HLYD_FAMILY"/>
    <property type="match status" value="1"/>
</dbReference>
<comment type="function">
    <text>Probably involved, in conjunction with MchF, in the secretion of microcin H47.</text>
</comment>
<comment type="subcellular location">
    <subcellularLocation>
        <location evidence="1">Cell inner membrane</location>
        <topology evidence="1">Single-pass membrane protein</topology>
    </subcellularLocation>
</comment>
<comment type="similarity">
    <text evidence="3">Belongs to the membrane fusion protein (MFP) (TC 8.A.1) family.</text>
</comment>
<accession>Q9EXN6</accession>
<accession>Q2WEK6</accession>
<sequence>MFRQDALENRKMKWQGRAILLPGIPLWLIMLGSIVFITAFLMFIIVGTYSRRVNVSGEVTTWPRAVNIYSGVQGFVVRQFVHEGQLIKKGDPVYLIDISKSTRSGIVTDNHRRDIENQLVRVDNIISRLEESKKITLDTLEKQRLQYTDAFRRSSDIIQRAEEGIKIMKNNMENYRNYQAKGLINKDQLTNQVALYYQQQNNLLSLSGQNEQNALQITTLESQIQTQAADFDNRIYQMELQRYELQKELVNTDVEGEIIIRALTDGKVDSLSVTVGQMVNTGDSLLQVIPENIENYYLILWVPNDAVPYISAGDKVNIRYEAFPAEKFGQFSATVKTISRTPASTQEMLTYKGAPQNTPGASVPWYKVIAMPEKQIIRYDEKYLPLENGMKAESTLFLEKRRIYQWMLSPFYDMKHSATGPLND</sequence>
<name>MCHE_ECOLX</name>
<proteinExistence type="inferred from homology"/>
<protein>
    <recommendedName>
        <fullName>Microcin H47 secretion protein MchE</fullName>
    </recommendedName>
</protein>
<reference key="1">
    <citation type="journal article" date="2001" name="Antimicrob. Agents Chemother.">
        <title>The structure, function, and origin of the microcin H47 ATP-binding cassette exporter indicate its relatedness to that of colicin V.</title>
        <authorList>
            <person name="Azpiroz M.F."/>
            <person name="Rodriguez E."/>
            <person name="Lavina M."/>
        </authorList>
    </citation>
    <scope>NUCLEOTIDE SEQUENCE [GENOMIC DNA]</scope>
    <source>
        <strain>H47</strain>
    </source>
</reference>
<reference key="2">
    <citation type="journal article" date="2004" name="Antimicrob. Agents Chemother.">
        <title>Involvement of enterobactin synthesis pathway in production of microcin H47.</title>
        <authorList>
            <person name="Azpiroz M.F."/>
            <person name="Lavina M."/>
        </authorList>
    </citation>
    <scope>NUCLEOTIDE SEQUENCE [GENOMIC DNA]</scope>
    <source>
        <strain>H47</strain>
    </source>
</reference>
<keyword id="KW-0080">Bacteriocin transport</keyword>
<keyword id="KW-0997">Cell inner membrane</keyword>
<keyword id="KW-1003">Cell membrane</keyword>
<keyword id="KW-0472">Membrane</keyword>
<keyword id="KW-0653">Protein transport</keyword>
<keyword id="KW-0812">Transmembrane</keyword>
<keyword id="KW-1133">Transmembrane helix</keyword>
<keyword id="KW-0813">Transport</keyword>
<feature type="chain" id="PRO_0000201881" description="Microcin H47 secretion protein MchE">
    <location>
        <begin position="1"/>
        <end position="424"/>
    </location>
</feature>
<feature type="topological domain" description="Cytoplasmic" evidence="2">
    <location>
        <begin position="1"/>
        <end position="25"/>
    </location>
</feature>
<feature type="transmembrane region" description="Helical" evidence="2">
    <location>
        <begin position="26"/>
        <end position="46"/>
    </location>
</feature>
<feature type="topological domain" description="Periplasmic" evidence="2">
    <location>
        <begin position="47"/>
        <end position="424"/>
    </location>
</feature>
<organism>
    <name type="scientific">Escherichia coli</name>
    <dbReference type="NCBI Taxonomy" id="562"/>
    <lineage>
        <taxon>Bacteria</taxon>
        <taxon>Pseudomonadati</taxon>
        <taxon>Pseudomonadota</taxon>
        <taxon>Gammaproteobacteria</taxon>
        <taxon>Enterobacterales</taxon>
        <taxon>Enterobacteriaceae</taxon>
        <taxon>Escherichia</taxon>
    </lineage>
</organism>